<feature type="chain" id="PRO_0000225005" description="Cell cycle checkpoint protein RAD1">
    <location>
        <begin position="1"/>
        <end position="282"/>
    </location>
</feature>
<feature type="splice variant" id="VSP_017334" description="In isoform 2." evidence="20 22">
    <location>
        <begin position="67"/>
        <end position="102"/>
    </location>
</feature>
<feature type="splice variant" id="VSP_017335" description="In isoform 3." evidence="21">
    <original>AG</original>
    <variation>GL</variation>
    <location>
        <begin position="67"/>
        <end position="68"/>
    </location>
</feature>
<feature type="splice variant" id="VSP_017336" description="In isoform 3." evidence="21">
    <location>
        <begin position="69"/>
        <end position="282"/>
    </location>
</feature>
<feature type="sequence variant" id="VAR_051718" description="In dbSNP:rs2308951.">
    <original>A</original>
    <variation>G</variation>
    <location>
        <position position="33"/>
    </location>
</feature>
<feature type="sequence variant" id="VAR_055376" description="In dbSNP:rs41271673." evidence="19">
    <original>H</original>
    <variation>Q</variation>
    <location>
        <position position="39"/>
    </location>
</feature>
<feature type="sequence variant" id="VAR_051719" description="In dbSNP:rs1805328.">
    <original>T</original>
    <variation>S</variation>
    <location>
        <position position="104"/>
    </location>
</feature>
<feature type="sequence variant" id="VAR_051720" description="In dbSNP:rs2308957.">
    <original>G</original>
    <variation>D</variation>
    <location>
        <position position="114"/>
    </location>
</feature>
<feature type="sequence variant" id="VAR_051721" description="In dbSNP:rs1805327." evidence="19">
    <original>E</original>
    <variation>G</variation>
    <location>
        <position position="281"/>
    </location>
</feature>
<feature type="mutagenesis site" description="Reduced binding to RHNO1; when associated with A-256 and A-266." evidence="16">
    <original>F</original>
    <variation>A</variation>
    <location>
        <position position="64"/>
    </location>
</feature>
<feature type="mutagenesis site" description="Reduced binding to RHNO1; when associated with A-244 and A-254." evidence="16">
    <original>K</original>
    <variation>A</variation>
    <location>
        <position position="155"/>
    </location>
</feature>
<feature type="mutagenesis site" description="Abolishes association of the 9-1-1 complex with RAD17." evidence="4">
    <original>SLLKPSTK</original>
    <variation>AAAAAAAA</variation>
    <location>
        <begin position="226"/>
        <end position="233"/>
    </location>
</feature>
<feature type="mutagenesis site" description="Reduced binding to RHNO1; when associated with A-155 and A-254." evidence="16">
    <original>R</original>
    <variation>A</variation>
    <location>
        <position position="244"/>
    </location>
</feature>
<feature type="mutagenesis site" description="Reduced binding to RHNO1; when associated with A-155 and A-244." evidence="16">
    <original>Q</original>
    <variation>A</variation>
    <location>
        <position position="254"/>
    </location>
</feature>
<feature type="mutagenesis site" description="Reduced binding to RHNO1; when associated with A-64 and A-266." evidence="16">
    <original>M</original>
    <variation>A</variation>
    <location>
        <position position="256"/>
    </location>
</feature>
<feature type="mutagenesis site" description="Reduced binding to RHNO1; when associated with A-64 and A-256." evidence="16">
    <original>F</original>
    <variation>A</variation>
    <location>
        <position position="266"/>
    </location>
</feature>
<feature type="sequence conflict" description="In Ref. 2; AAC95466." evidence="23" ref="2">
    <original>N</original>
    <variation>T</variation>
    <location>
        <position position="135"/>
    </location>
</feature>
<feature type="strand" evidence="28">
    <location>
        <begin position="16"/>
        <end position="22"/>
    </location>
</feature>
<feature type="helix" evidence="28">
    <location>
        <begin position="25"/>
        <end position="32"/>
    </location>
</feature>
<feature type="strand" evidence="28">
    <location>
        <begin position="36"/>
        <end position="44"/>
    </location>
</feature>
<feature type="strand" evidence="28">
    <location>
        <begin position="46"/>
        <end position="55"/>
    </location>
</feature>
<feature type="turn" evidence="28">
    <location>
        <begin position="56"/>
        <end position="58"/>
    </location>
</feature>
<feature type="strand" evidence="28">
    <location>
        <begin position="59"/>
        <end position="66"/>
    </location>
</feature>
<feature type="helix" evidence="28">
    <location>
        <begin position="67"/>
        <end position="69"/>
    </location>
</feature>
<feature type="strand" evidence="28">
    <location>
        <begin position="70"/>
        <end position="78"/>
    </location>
</feature>
<feature type="strand" evidence="28">
    <location>
        <begin position="80"/>
        <end position="85"/>
    </location>
</feature>
<feature type="helix" evidence="28">
    <location>
        <begin position="86"/>
        <end position="93"/>
    </location>
</feature>
<feature type="turn" evidence="28">
    <location>
        <begin position="94"/>
        <end position="96"/>
    </location>
</feature>
<feature type="strand" evidence="28">
    <location>
        <begin position="107"/>
        <end position="112"/>
    </location>
</feature>
<feature type="strand" evidence="26">
    <location>
        <begin position="114"/>
        <end position="117"/>
    </location>
</feature>
<feature type="strand" evidence="28">
    <location>
        <begin position="119"/>
        <end position="125"/>
    </location>
</feature>
<feature type="strand" evidence="28">
    <location>
        <begin position="128"/>
        <end position="134"/>
    </location>
</feature>
<feature type="helix" evidence="28">
    <location>
        <begin position="149"/>
        <end position="151"/>
    </location>
</feature>
<feature type="strand" evidence="28">
    <location>
        <begin position="152"/>
        <end position="159"/>
    </location>
</feature>
<feature type="helix" evidence="28">
    <location>
        <begin position="161"/>
        <end position="168"/>
    </location>
</feature>
<feature type="strand" evidence="28">
    <location>
        <begin position="174"/>
        <end position="181"/>
    </location>
</feature>
<feature type="strand" evidence="26">
    <location>
        <begin position="183"/>
        <end position="185"/>
    </location>
</feature>
<feature type="strand" evidence="28">
    <location>
        <begin position="187"/>
        <end position="193"/>
    </location>
</feature>
<feature type="strand" evidence="28">
    <location>
        <begin position="195"/>
        <end position="203"/>
    </location>
</feature>
<feature type="strand" evidence="27">
    <location>
        <begin position="205"/>
        <end position="207"/>
    </location>
</feature>
<feature type="strand" evidence="28">
    <location>
        <begin position="210"/>
        <end position="215"/>
    </location>
</feature>
<feature type="strand" evidence="28">
    <location>
        <begin position="219"/>
        <end position="224"/>
    </location>
</feature>
<feature type="helix" evidence="28">
    <location>
        <begin position="225"/>
        <end position="228"/>
    </location>
</feature>
<feature type="helix" evidence="28">
    <location>
        <begin position="229"/>
        <end position="231"/>
    </location>
</feature>
<feature type="helix" evidence="28">
    <location>
        <begin position="232"/>
        <end position="237"/>
    </location>
</feature>
<feature type="strand" evidence="28">
    <location>
        <begin position="238"/>
        <end position="246"/>
    </location>
</feature>
<feature type="strand" evidence="27">
    <location>
        <begin position="247"/>
        <end position="249"/>
    </location>
</feature>
<feature type="strand" evidence="28">
    <location>
        <begin position="251"/>
        <end position="258"/>
    </location>
</feature>
<feature type="strand" evidence="27">
    <location>
        <begin position="260"/>
        <end position="262"/>
    </location>
</feature>
<feature type="strand" evidence="28">
    <location>
        <begin position="264"/>
        <end position="271"/>
    </location>
</feature>
<name>RAD1_HUMAN</name>
<dbReference type="EMBL" id="AF074717">
    <property type="protein sequence ID" value="AAC98093.1"/>
    <property type="molecule type" value="mRNA"/>
</dbReference>
<dbReference type="EMBL" id="AF073524">
    <property type="protein sequence ID" value="AAC95466.1"/>
    <property type="molecule type" value="mRNA"/>
</dbReference>
<dbReference type="EMBL" id="AF030933">
    <property type="protein sequence ID" value="AAC95427.1"/>
    <property type="molecule type" value="mRNA"/>
</dbReference>
<dbReference type="EMBL" id="AF076841">
    <property type="protein sequence ID" value="AAC95523.1"/>
    <property type="molecule type" value="mRNA"/>
</dbReference>
<dbReference type="EMBL" id="AF090170">
    <property type="protein sequence ID" value="AAC95603.1"/>
    <property type="molecule type" value="mRNA"/>
</dbReference>
<dbReference type="EMBL" id="AJ004974">
    <property type="protein sequence ID" value="CAA06248.1"/>
    <property type="molecule type" value="mRNA"/>
</dbReference>
<dbReference type="EMBL" id="AJ004975">
    <property type="protein sequence ID" value="CAA06249.1"/>
    <property type="status" value="ALT_SEQ"/>
    <property type="molecule type" value="mRNA"/>
</dbReference>
<dbReference type="EMBL" id="AF011905">
    <property type="protein sequence ID" value="AAC27243.1"/>
    <property type="molecule type" value="mRNA"/>
</dbReference>
<dbReference type="EMBL" id="AF058392">
    <property type="protein sequence ID" value="AAC14138.1"/>
    <property type="molecule type" value="mRNA"/>
</dbReference>
<dbReference type="EMBL" id="AF084512">
    <property type="protein sequence ID" value="AAC35549.1"/>
    <property type="molecule type" value="mRNA"/>
</dbReference>
<dbReference type="EMBL" id="AF084513">
    <property type="protein sequence ID" value="AAC35550.1"/>
    <property type="status" value="ALT_SEQ"/>
    <property type="molecule type" value="mRNA"/>
</dbReference>
<dbReference type="EMBL" id="AK002112">
    <property type="protein sequence ID" value="BAG51017.1"/>
    <property type="molecule type" value="mRNA"/>
</dbReference>
<dbReference type="EMBL" id="BT006908">
    <property type="protein sequence ID" value="AAP35554.1"/>
    <property type="molecule type" value="mRNA"/>
</dbReference>
<dbReference type="EMBL" id="DQ451401">
    <property type="protein sequence ID" value="ABD96829.1"/>
    <property type="molecule type" value="Genomic_DNA"/>
</dbReference>
<dbReference type="EMBL" id="CH471119">
    <property type="protein sequence ID" value="EAW55904.1"/>
    <property type="molecule type" value="Genomic_DNA"/>
</dbReference>
<dbReference type="EMBL" id="BC006837">
    <property type="protein sequence ID" value="AAH06837.1"/>
    <property type="molecule type" value="mRNA"/>
</dbReference>
<dbReference type="EMBL" id="BC009804">
    <property type="protein sequence ID" value="AAH09804.1"/>
    <property type="molecule type" value="mRNA"/>
</dbReference>
<dbReference type="EMBL" id="BC037857">
    <property type="protein sequence ID" value="AAH37857.1"/>
    <property type="molecule type" value="mRNA"/>
</dbReference>
<dbReference type="EMBL" id="AB183821">
    <property type="protein sequence ID" value="BAD86789.1"/>
    <property type="molecule type" value="Genomic_DNA"/>
</dbReference>
<dbReference type="EMBL" id="AB183822">
    <property type="protein sequence ID" value="BAD86790.1"/>
    <property type="molecule type" value="Genomic_DNA"/>
</dbReference>
<dbReference type="CCDS" id="CCDS3905.1">
    <molecule id="O60671-1"/>
</dbReference>
<dbReference type="RefSeq" id="NP_002844.1">
    <molecule id="O60671-1"/>
    <property type="nucleotide sequence ID" value="NM_002853.4"/>
</dbReference>
<dbReference type="RefSeq" id="XP_054208998.1">
    <molecule id="O60671-1"/>
    <property type="nucleotide sequence ID" value="XM_054353023.1"/>
</dbReference>
<dbReference type="PDB" id="3A1J">
    <property type="method" value="X-ray"/>
    <property type="resolution" value="2.50 A"/>
    <property type="chains" value="C=13-275"/>
</dbReference>
<dbReference type="PDB" id="3G65">
    <property type="method" value="X-ray"/>
    <property type="resolution" value="2.90 A"/>
    <property type="chains" value="B=1-282"/>
</dbReference>
<dbReference type="PDB" id="3GGR">
    <property type="method" value="X-ray"/>
    <property type="resolution" value="3.20 A"/>
    <property type="chains" value="C=1-282"/>
</dbReference>
<dbReference type="PDB" id="6J8Y">
    <property type="method" value="X-ray"/>
    <property type="resolution" value="2.40 A"/>
    <property type="chains" value="C=1-282"/>
</dbReference>
<dbReference type="PDB" id="7Z6H">
    <property type="method" value="EM"/>
    <property type="resolution" value="3.59 A"/>
    <property type="chains" value="B/K=1-282"/>
</dbReference>
<dbReference type="PDB" id="8GNN">
    <property type="method" value="X-ray"/>
    <property type="resolution" value="2.12 A"/>
    <property type="chains" value="C=1-282"/>
</dbReference>
<dbReference type="PDB" id="8WU8">
    <property type="method" value="X-ray"/>
    <property type="resolution" value="2.81 A"/>
    <property type="chains" value="C=1-282"/>
</dbReference>
<dbReference type="PDBsum" id="3A1J"/>
<dbReference type="PDBsum" id="3G65"/>
<dbReference type="PDBsum" id="3GGR"/>
<dbReference type="PDBsum" id="6J8Y"/>
<dbReference type="PDBsum" id="7Z6H"/>
<dbReference type="PDBsum" id="8GNN"/>
<dbReference type="PDBsum" id="8WU8"/>
<dbReference type="SMR" id="O60671"/>
<dbReference type="BioGRID" id="111771">
    <property type="interactions" value="53"/>
</dbReference>
<dbReference type="ComplexPortal" id="CPX-1829">
    <property type="entry name" value="Checkpoint clamp complex"/>
</dbReference>
<dbReference type="CORUM" id="O60671"/>
<dbReference type="DIP" id="DIP-46061N"/>
<dbReference type="FunCoup" id="O60671">
    <property type="interactions" value="4017"/>
</dbReference>
<dbReference type="IntAct" id="O60671">
    <property type="interactions" value="23"/>
</dbReference>
<dbReference type="MINT" id="O60671"/>
<dbReference type="STRING" id="9606.ENSP00000371469"/>
<dbReference type="BindingDB" id="O60671"/>
<dbReference type="ChEMBL" id="CHEMBL3309116"/>
<dbReference type="GlyGen" id="O60671">
    <property type="glycosylation" value="2 sites, 2 N-linked glycans (2 sites)"/>
</dbReference>
<dbReference type="iPTMnet" id="O60671"/>
<dbReference type="PhosphoSitePlus" id="O60671"/>
<dbReference type="BioMuta" id="RAD1"/>
<dbReference type="jPOST" id="O60671"/>
<dbReference type="MassIVE" id="O60671"/>
<dbReference type="PaxDb" id="9606-ENSP00000371469"/>
<dbReference type="PeptideAtlas" id="O60671"/>
<dbReference type="ProteomicsDB" id="49514">
    <molecule id="O60671-1"/>
</dbReference>
<dbReference type="ProteomicsDB" id="49515">
    <molecule id="O60671-2"/>
</dbReference>
<dbReference type="ProteomicsDB" id="49516">
    <molecule id="O60671-3"/>
</dbReference>
<dbReference type="Pumba" id="O60671"/>
<dbReference type="Antibodypedia" id="10031">
    <property type="antibodies" value="354 antibodies from 33 providers"/>
</dbReference>
<dbReference type="CPTC" id="O60671">
    <property type="antibodies" value="1 antibody"/>
</dbReference>
<dbReference type="DNASU" id="5810"/>
<dbReference type="Ensembl" id="ENST00000325577.8">
    <molecule id="O60671-3"/>
    <property type="protein sequence ID" value="ENSP00000313467.4"/>
    <property type="gene ID" value="ENSG00000113456.20"/>
</dbReference>
<dbReference type="Ensembl" id="ENST00000341754.8">
    <molecule id="O60671-1"/>
    <property type="protein sequence ID" value="ENSP00000340879.4"/>
    <property type="gene ID" value="ENSG00000113456.20"/>
</dbReference>
<dbReference type="Ensembl" id="ENST00000382038.7">
    <molecule id="O60671-1"/>
    <property type="protein sequence ID" value="ENSP00000371469.2"/>
    <property type="gene ID" value="ENSG00000113456.20"/>
</dbReference>
<dbReference type="GeneID" id="5810"/>
<dbReference type="KEGG" id="hsa:5810"/>
<dbReference type="MANE-Select" id="ENST00000382038.7">
    <property type="protein sequence ID" value="ENSP00000371469.2"/>
    <property type="RefSeq nucleotide sequence ID" value="NM_002853.4"/>
    <property type="RefSeq protein sequence ID" value="NP_002844.1"/>
</dbReference>
<dbReference type="UCSC" id="uc003jix.4">
    <molecule id="O60671-1"/>
    <property type="organism name" value="human"/>
</dbReference>
<dbReference type="AGR" id="HGNC:9806"/>
<dbReference type="CTD" id="5810"/>
<dbReference type="DisGeNET" id="5810"/>
<dbReference type="GeneCards" id="RAD1"/>
<dbReference type="HGNC" id="HGNC:9806">
    <property type="gene designation" value="RAD1"/>
</dbReference>
<dbReference type="HPA" id="ENSG00000113456">
    <property type="expression patterns" value="Low tissue specificity"/>
</dbReference>
<dbReference type="MalaCards" id="RAD1"/>
<dbReference type="MIM" id="603153">
    <property type="type" value="gene"/>
</dbReference>
<dbReference type="neXtProt" id="NX_O60671"/>
<dbReference type="OpenTargets" id="ENSG00000113456"/>
<dbReference type="PharmGKB" id="PA34166"/>
<dbReference type="VEuPathDB" id="HostDB:ENSG00000113456"/>
<dbReference type="eggNOG" id="KOG3194">
    <property type="taxonomic scope" value="Eukaryota"/>
</dbReference>
<dbReference type="GeneTree" id="ENSGT00500000044913"/>
<dbReference type="HOGENOM" id="CLU_035332_2_1_1"/>
<dbReference type="InParanoid" id="O60671"/>
<dbReference type="OMA" id="WSQAYKF"/>
<dbReference type="OrthoDB" id="337581at2759"/>
<dbReference type="PAN-GO" id="O60671">
    <property type="GO annotations" value="4 GO annotations based on evolutionary models"/>
</dbReference>
<dbReference type="PhylomeDB" id="O60671"/>
<dbReference type="TreeFam" id="TF101211"/>
<dbReference type="PathwayCommons" id="O60671"/>
<dbReference type="Reactome" id="R-HSA-176187">
    <property type="pathway name" value="Activation of ATR in response to replication stress"/>
</dbReference>
<dbReference type="Reactome" id="R-HSA-5685938">
    <property type="pathway name" value="HDR through Single Strand Annealing (SSA)"/>
</dbReference>
<dbReference type="Reactome" id="R-HSA-5693607">
    <property type="pathway name" value="Processing of DNA double-strand break ends"/>
</dbReference>
<dbReference type="Reactome" id="R-HSA-5693616">
    <property type="pathway name" value="Presynaptic phase of homologous DNA pairing and strand exchange"/>
</dbReference>
<dbReference type="Reactome" id="R-HSA-6804756">
    <property type="pathway name" value="Regulation of TP53 Activity through Phosphorylation"/>
</dbReference>
<dbReference type="Reactome" id="R-HSA-69473">
    <property type="pathway name" value="G2/M DNA damage checkpoint"/>
</dbReference>
<dbReference type="Reactome" id="R-HSA-9709570">
    <property type="pathway name" value="Impaired BRCA2 binding to RAD51"/>
</dbReference>
<dbReference type="SignaLink" id="O60671"/>
<dbReference type="SIGNOR" id="O60671"/>
<dbReference type="BioGRID-ORCS" id="5810">
    <property type="hits" value="408 hits in 1158 CRISPR screens"/>
</dbReference>
<dbReference type="ChiTaRS" id="RAD1">
    <property type="organism name" value="human"/>
</dbReference>
<dbReference type="EvolutionaryTrace" id="O60671"/>
<dbReference type="GeneWiki" id="RAD1_homolog"/>
<dbReference type="GenomeRNAi" id="5810"/>
<dbReference type="Pharos" id="O60671">
    <property type="development level" value="Tchem"/>
</dbReference>
<dbReference type="PRO" id="PR:O60671"/>
<dbReference type="Proteomes" id="UP000005640">
    <property type="component" value="Chromosome 5"/>
</dbReference>
<dbReference type="RNAct" id="O60671">
    <property type="molecule type" value="protein"/>
</dbReference>
<dbReference type="Bgee" id="ENSG00000113456">
    <property type="expression patterns" value="Expressed in secondary oocyte and 223 other cell types or tissues"/>
</dbReference>
<dbReference type="ExpressionAtlas" id="O60671">
    <property type="expression patterns" value="baseline and differential"/>
</dbReference>
<dbReference type="GO" id="GO:0030896">
    <property type="term" value="C:checkpoint clamp complex"/>
    <property type="evidence" value="ECO:0000314"/>
    <property type="project" value="UniProtKB"/>
</dbReference>
<dbReference type="GO" id="GO:0005694">
    <property type="term" value="C:chromosome"/>
    <property type="evidence" value="ECO:0000314"/>
    <property type="project" value="UniProtKB"/>
</dbReference>
<dbReference type="GO" id="GO:0043231">
    <property type="term" value="C:intracellular membrane-bounded organelle"/>
    <property type="evidence" value="ECO:0000314"/>
    <property type="project" value="HPA"/>
</dbReference>
<dbReference type="GO" id="GO:0005654">
    <property type="term" value="C:nucleoplasm"/>
    <property type="evidence" value="ECO:0000314"/>
    <property type="project" value="HPA"/>
</dbReference>
<dbReference type="GO" id="GO:0003684">
    <property type="term" value="F:damaged DNA binding"/>
    <property type="evidence" value="ECO:0000304"/>
    <property type="project" value="ProtInc"/>
</dbReference>
<dbReference type="GO" id="GO:0008311">
    <property type="term" value="F:double-stranded DNA 3'-5' DNA exonuclease activity"/>
    <property type="evidence" value="ECO:0007669"/>
    <property type="project" value="UniProtKB-EC"/>
</dbReference>
<dbReference type="GO" id="GO:0071479">
    <property type="term" value="P:cellular response to ionizing radiation"/>
    <property type="evidence" value="ECO:0000314"/>
    <property type="project" value="UniProtKB"/>
</dbReference>
<dbReference type="GO" id="GO:0000077">
    <property type="term" value="P:DNA damage checkpoint signaling"/>
    <property type="evidence" value="ECO:0000315"/>
    <property type="project" value="UniProtKB"/>
</dbReference>
<dbReference type="GO" id="GO:0006974">
    <property type="term" value="P:DNA damage response"/>
    <property type="evidence" value="ECO:0000304"/>
    <property type="project" value="ProtInc"/>
</dbReference>
<dbReference type="GO" id="GO:0006281">
    <property type="term" value="P:DNA repair"/>
    <property type="evidence" value="ECO:0000318"/>
    <property type="project" value="GO_Central"/>
</dbReference>
<dbReference type="GO" id="GO:0051598">
    <property type="term" value="P:meiotic recombination checkpoint signaling"/>
    <property type="evidence" value="ECO:0000316"/>
    <property type="project" value="UniProtKB"/>
</dbReference>
<dbReference type="GO" id="GO:0021762">
    <property type="term" value="P:substantia nigra development"/>
    <property type="evidence" value="ECO:0007007"/>
    <property type="project" value="UniProtKB"/>
</dbReference>
<dbReference type="CDD" id="cd00577">
    <property type="entry name" value="PCNA"/>
    <property type="match status" value="1"/>
</dbReference>
<dbReference type="FunFam" id="3.70.10.10:FF:000004">
    <property type="entry name" value="Cell cycle checkpoint protein RAD1"/>
    <property type="match status" value="1"/>
</dbReference>
<dbReference type="Gene3D" id="3.70.10.10">
    <property type="match status" value="1"/>
</dbReference>
<dbReference type="InterPro" id="IPR003011">
    <property type="entry name" value="Cell_cycle_checkpoint_Rad1"/>
</dbReference>
<dbReference type="InterPro" id="IPR046938">
    <property type="entry name" value="DNA_clamp_sf"/>
</dbReference>
<dbReference type="InterPro" id="IPR003021">
    <property type="entry name" value="Rad1_Rec1_Rad17"/>
</dbReference>
<dbReference type="PANTHER" id="PTHR10870">
    <property type="entry name" value="CELL CYCLE CHECKPOINT PROTEIN RAD1"/>
    <property type="match status" value="1"/>
</dbReference>
<dbReference type="PANTHER" id="PTHR10870:SF0">
    <property type="entry name" value="CELL CYCLE CHECKPOINT PROTEIN RAD1"/>
    <property type="match status" value="1"/>
</dbReference>
<dbReference type="Pfam" id="PF02144">
    <property type="entry name" value="Rad1"/>
    <property type="match status" value="1"/>
</dbReference>
<dbReference type="PRINTS" id="PR01245">
    <property type="entry name" value="RAD1REC1"/>
</dbReference>
<dbReference type="PRINTS" id="PR01246">
    <property type="entry name" value="RAD1REPAIR"/>
</dbReference>
<dbReference type="SUPFAM" id="SSF55979">
    <property type="entry name" value="DNA clamp"/>
    <property type="match status" value="1"/>
</dbReference>
<organism>
    <name type="scientific">Homo sapiens</name>
    <name type="common">Human</name>
    <dbReference type="NCBI Taxonomy" id="9606"/>
    <lineage>
        <taxon>Eukaryota</taxon>
        <taxon>Metazoa</taxon>
        <taxon>Chordata</taxon>
        <taxon>Craniata</taxon>
        <taxon>Vertebrata</taxon>
        <taxon>Euteleostomi</taxon>
        <taxon>Mammalia</taxon>
        <taxon>Eutheria</taxon>
        <taxon>Euarchontoglires</taxon>
        <taxon>Primates</taxon>
        <taxon>Haplorrhini</taxon>
        <taxon>Catarrhini</taxon>
        <taxon>Hominidae</taxon>
        <taxon>Homo</taxon>
    </lineage>
</organism>
<evidence type="ECO:0000269" key="1">
    <source>
    </source>
</evidence>
<evidence type="ECO:0000269" key="2">
    <source>
    </source>
</evidence>
<evidence type="ECO:0000269" key="3">
    <source>
    </source>
</evidence>
<evidence type="ECO:0000269" key="4">
    <source>
    </source>
</evidence>
<evidence type="ECO:0000269" key="5">
    <source>
    </source>
</evidence>
<evidence type="ECO:0000269" key="6">
    <source>
    </source>
</evidence>
<evidence type="ECO:0000269" key="7">
    <source>
    </source>
</evidence>
<evidence type="ECO:0000269" key="8">
    <source>
    </source>
</evidence>
<evidence type="ECO:0000269" key="9">
    <source>
    </source>
</evidence>
<evidence type="ECO:0000269" key="10">
    <source>
    </source>
</evidence>
<evidence type="ECO:0000269" key="11">
    <source>
    </source>
</evidence>
<evidence type="ECO:0000269" key="12">
    <source>
    </source>
</evidence>
<evidence type="ECO:0000269" key="13">
    <source>
    </source>
</evidence>
<evidence type="ECO:0000269" key="14">
    <source>
    </source>
</evidence>
<evidence type="ECO:0000269" key="15">
    <source>
    </source>
</evidence>
<evidence type="ECO:0000269" key="16">
    <source>
    </source>
</evidence>
<evidence type="ECO:0000269" key="17">
    <source>
    </source>
</evidence>
<evidence type="ECO:0000269" key="18">
    <source>
    </source>
</evidence>
<evidence type="ECO:0000269" key="19">
    <source ref="11"/>
</evidence>
<evidence type="ECO:0000303" key="20">
    <source>
    </source>
</evidence>
<evidence type="ECO:0000303" key="21">
    <source>
    </source>
</evidence>
<evidence type="ECO:0000303" key="22">
    <source ref="8"/>
</evidence>
<evidence type="ECO:0000305" key="23"/>
<evidence type="ECO:0007744" key="24">
    <source>
        <dbReference type="PDB" id="6J8Y"/>
    </source>
</evidence>
<evidence type="ECO:0007744" key="25">
    <source>
        <dbReference type="PDB" id="8GNN"/>
    </source>
</evidence>
<evidence type="ECO:0007829" key="26">
    <source>
        <dbReference type="PDB" id="3G65"/>
    </source>
</evidence>
<evidence type="ECO:0007829" key="27">
    <source>
        <dbReference type="PDB" id="3GGR"/>
    </source>
</evidence>
<evidence type="ECO:0007829" key="28">
    <source>
        <dbReference type="PDB" id="8GNN"/>
    </source>
</evidence>
<reference key="1">
    <citation type="journal article" date="1998" name="Genes Dev.">
        <title>Human and mouse homologs of Schizosaccharomyces pombe rad1(+) and Saccharomyces cerevisiae RAD17: linkage to checkpoint control and mammalian meiosis.</title>
        <authorList>
            <person name="Freire R."/>
            <person name="Murguia J.R."/>
            <person name="Tarsounas M."/>
            <person name="Lowndes N.F."/>
            <person name="Moens P.B."/>
            <person name="Jackson S.P."/>
        </authorList>
    </citation>
    <scope>NUCLEOTIDE SEQUENCE [MRNA] (ISOFORM 1)</scope>
    <scope>SUBCELLULAR LOCATION</scope>
    <scope>TISSUE SPECIFICITY</scope>
</reference>
<reference key="2">
    <citation type="journal article" date="1998" name="Genomics">
        <title>A human and mouse homolog of the Schizosaccharomyces pombe rad1+ cell cycle checkpoint control gene.</title>
        <authorList>
            <person name="Bluyssen H.A.R."/>
            <person name="van Os R.I."/>
            <person name="Naus N.C."/>
            <person name="Jaspers I."/>
            <person name="Hoeijmakers J.H.J."/>
            <person name="de Klein A."/>
        </authorList>
    </citation>
    <scope>NUCLEOTIDE SEQUENCE [MRNA] (ISOFORM 1)</scope>
</reference>
<reference key="3">
    <citation type="journal article" date="1998" name="Genomics">
        <title>RAD1, a human structural homolog of the Schizosaccharomyces pombe RAD1 cell cycle checkpoint gene.</title>
        <authorList>
            <person name="Marathi U.K."/>
            <person name="Dahlen M."/>
            <person name="Sunnerhagen P."/>
            <person name="Romero A.V."/>
            <person name="Ramagli L.S."/>
            <person name="Siciliano M.J."/>
            <person name="Li L."/>
            <person name="Legerski R.J."/>
        </authorList>
    </citation>
    <scope>NUCLEOTIDE SEQUENCE [MRNA] (ISOFORM 1)</scope>
    <source>
        <tissue>Cervix carcinoma</tissue>
    </source>
</reference>
<reference key="4">
    <citation type="journal article" date="1998" name="Genomics">
        <title>cDNA cloning and gene mapping of human homologs for Schizosaccharomyces pombe rad17, rad1, and hus1 and cloning of homologs from mouse, Caenorhabditis elegans, and Drosophila melanogaster.</title>
        <authorList>
            <person name="Dean F.B."/>
            <person name="Lian L."/>
            <person name="O'Donnell M."/>
        </authorList>
    </citation>
    <scope>NUCLEOTIDE SEQUENCE [MRNA] (ISOFORMS 1 AND 3)</scope>
</reference>
<reference key="5">
    <citation type="journal article" date="1998" name="J. Biol. Chem.">
        <title>A human homologue of the Schizosaccharomyces pombe rad1+ checkpoint gene encodes an exonuclease.</title>
        <authorList>
            <person name="Parker A.E."/>
            <person name="Van de Weyer I."/>
            <person name="Laus M.C."/>
            <person name="Oostveen I."/>
            <person name="Yon J."/>
            <person name="Verhasselt P."/>
            <person name="Luyten W.H.M.L."/>
        </authorList>
    </citation>
    <scope>NUCLEOTIDE SEQUENCE [MRNA] (ISOFORMS 1 AND 2)</scope>
</reference>
<reference key="6">
    <citation type="journal article" date="1998" name="Nucleic Acids Res.">
        <title>HRAD1 and MRad1 encode mammalian homologues of the fission yeast rad1+ cell cycle checkpoint control gene.</title>
        <authorList>
            <person name="Udell C.M."/>
            <person name="Lee S.K."/>
            <person name="Davey S."/>
        </authorList>
    </citation>
    <scope>NUCLEOTIDE SEQUENCE [MRNA] (ISOFORM 1)</scope>
</reference>
<reference key="7">
    <citation type="submission" date="1998-04" db="EMBL/GenBank/DDBJ databases">
        <title>Identification and cloning of Hrad1, a human homolog of the Schizosaccharomyces pombe checkpoint protein.</title>
        <authorList>
            <person name="Hao L."/>
            <person name="Chang M."/>
            <person name="Liu J."/>
            <person name="Chen L.B."/>
        </authorList>
    </citation>
    <scope>NUCLEOTIDE SEQUENCE [MRNA] (ISOFORM 1)</scope>
</reference>
<reference key="8">
    <citation type="submission" date="1998-08" db="EMBL/GenBank/DDBJ databases">
        <title>Mammalian REC1, encoding a 3'-5' exonuclease, is differentially expressed during meiosis.</title>
        <authorList>
            <person name="Shannon M.E."/>
            <person name="Naureckiene S."/>
            <person name="Stubbs L."/>
            <person name="Holloman W.K."/>
            <person name="Thelen M.P."/>
        </authorList>
    </citation>
    <scope>NUCLEOTIDE SEQUENCE [MRNA] (ISOFORMS 1 AND 2)</scope>
</reference>
<reference key="9">
    <citation type="journal article" date="2004" name="Nat. Genet.">
        <title>Complete sequencing and characterization of 21,243 full-length human cDNAs.</title>
        <authorList>
            <person name="Ota T."/>
            <person name="Suzuki Y."/>
            <person name="Nishikawa T."/>
            <person name="Otsuki T."/>
            <person name="Sugiyama T."/>
            <person name="Irie R."/>
            <person name="Wakamatsu A."/>
            <person name="Hayashi K."/>
            <person name="Sato H."/>
            <person name="Nagai K."/>
            <person name="Kimura K."/>
            <person name="Makita H."/>
            <person name="Sekine M."/>
            <person name="Obayashi M."/>
            <person name="Nishi T."/>
            <person name="Shibahara T."/>
            <person name="Tanaka T."/>
            <person name="Ishii S."/>
            <person name="Yamamoto J."/>
            <person name="Saito K."/>
            <person name="Kawai Y."/>
            <person name="Isono Y."/>
            <person name="Nakamura Y."/>
            <person name="Nagahari K."/>
            <person name="Murakami K."/>
            <person name="Yasuda T."/>
            <person name="Iwayanagi T."/>
            <person name="Wagatsuma M."/>
            <person name="Shiratori A."/>
            <person name="Sudo H."/>
            <person name="Hosoiri T."/>
            <person name="Kaku Y."/>
            <person name="Kodaira H."/>
            <person name="Kondo H."/>
            <person name="Sugawara M."/>
            <person name="Takahashi M."/>
            <person name="Kanda K."/>
            <person name="Yokoi T."/>
            <person name="Furuya T."/>
            <person name="Kikkawa E."/>
            <person name="Omura Y."/>
            <person name="Abe K."/>
            <person name="Kamihara K."/>
            <person name="Katsuta N."/>
            <person name="Sato K."/>
            <person name="Tanikawa M."/>
            <person name="Yamazaki M."/>
            <person name="Ninomiya K."/>
            <person name="Ishibashi T."/>
            <person name="Yamashita H."/>
            <person name="Murakawa K."/>
            <person name="Fujimori K."/>
            <person name="Tanai H."/>
            <person name="Kimata M."/>
            <person name="Watanabe M."/>
            <person name="Hiraoka S."/>
            <person name="Chiba Y."/>
            <person name="Ishida S."/>
            <person name="Ono Y."/>
            <person name="Takiguchi S."/>
            <person name="Watanabe S."/>
            <person name="Yosida M."/>
            <person name="Hotuta T."/>
            <person name="Kusano J."/>
            <person name="Kanehori K."/>
            <person name="Takahashi-Fujii A."/>
            <person name="Hara H."/>
            <person name="Tanase T.-O."/>
            <person name="Nomura Y."/>
            <person name="Togiya S."/>
            <person name="Komai F."/>
            <person name="Hara R."/>
            <person name="Takeuchi K."/>
            <person name="Arita M."/>
            <person name="Imose N."/>
            <person name="Musashino K."/>
            <person name="Yuuki H."/>
            <person name="Oshima A."/>
            <person name="Sasaki N."/>
            <person name="Aotsuka S."/>
            <person name="Yoshikawa Y."/>
            <person name="Matsunawa H."/>
            <person name="Ichihara T."/>
            <person name="Shiohata N."/>
            <person name="Sano S."/>
            <person name="Moriya S."/>
            <person name="Momiyama H."/>
            <person name="Satoh N."/>
            <person name="Takami S."/>
            <person name="Terashima Y."/>
            <person name="Suzuki O."/>
            <person name="Nakagawa S."/>
            <person name="Senoh A."/>
            <person name="Mizoguchi H."/>
            <person name="Goto Y."/>
            <person name="Shimizu F."/>
            <person name="Wakebe H."/>
            <person name="Hishigaki H."/>
            <person name="Watanabe T."/>
            <person name="Sugiyama A."/>
            <person name="Takemoto M."/>
            <person name="Kawakami B."/>
            <person name="Yamazaki M."/>
            <person name="Watanabe K."/>
            <person name="Kumagai A."/>
            <person name="Itakura S."/>
            <person name="Fukuzumi Y."/>
            <person name="Fujimori Y."/>
            <person name="Komiyama M."/>
            <person name="Tashiro H."/>
            <person name="Tanigami A."/>
            <person name="Fujiwara T."/>
            <person name="Ono T."/>
            <person name="Yamada K."/>
            <person name="Fujii Y."/>
            <person name="Ozaki K."/>
            <person name="Hirao M."/>
            <person name="Ohmori Y."/>
            <person name="Kawabata A."/>
            <person name="Hikiji T."/>
            <person name="Kobatake N."/>
            <person name="Inagaki H."/>
            <person name="Ikema Y."/>
            <person name="Okamoto S."/>
            <person name="Okitani R."/>
            <person name="Kawakami T."/>
            <person name="Noguchi S."/>
            <person name="Itoh T."/>
            <person name="Shigeta K."/>
            <person name="Senba T."/>
            <person name="Matsumura K."/>
            <person name="Nakajima Y."/>
            <person name="Mizuno T."/>
            <person name="Morinaga M."/>
            <person name="Sasaki M."/>
            <person name="Togashi T."/>
            <person name="Oyama M."/>
            <person name="Hata H."/>
            <person name="Watanabe M."/>
            <person name="Komatsu T."/>
            <person name="Mizushima-Sugano J."/>
            <person name="Satoh T."/>
            <person name="Shirai Y."/>
            <person name="Takahashi Y."/>
            <person name="Nakagawa K."/>
            <person name="Okumura K."/>
            <person name="Nagase T."/>
            <person name="Nomura N."/>
            <person name="Kikuchi H."/>
            <person name="Masuho Y."/>
            <person name="Yamashita R."/>
            <person name="Nakai K."/>
            <person name="Yada T."/>
            <person name="Nakamura Y."/>
            <person name="Ohara O."/>
            <person name="Isogai T."/>
            <person name="Sugano S."/>
        </authorList>
    </citation>
    <scope>NUCLEOTIDE SEQUENCE [LARGE SCALE MRNA] (ISOFORM 1)</scope>
    <source>
        <tissue>Placenta</tissue>
    </source>
</reference>
<reference key="10">
    <citation type="submission" date="2003-05" db="EMBL/GenBank/DDBJ databases">
        <title>Cloning of human full-length CDSs in BD Creator(TM) system donor vector.</title>
        <authorList>
            <person name="Kalnine N."/>
            <person name="Chen X."/>
            <person name="Rolfs A."/>
            <person name="Halleck A."/>
            <person name="Hines L."/>
            <person name="Eisenstein S."/>
            <person name="Koundinya M."/>
            <person name="Raphael J."/>
            <person name="Moreira D."/>
            <person name="Kelley T."/>
            <person name="LaBaer J."/>
            <person name="Lin Y."/>
            <person name="Phelan M."/>
            <person name="Farmer A."/>
        </authorList>
    </citation>
    <scope>NUCLEOTIDE SEQUENCE [LARGE SCALE MRNA] (ISOFORM 1)</scope>
</reference>
<reference key="11">
    <citation type="submission" date="2006-03" db="EMBL/GenBank/DDBJ databases">
        <authorList>
            <consortium name="NIEHS SNPs program"/>
        </authorList>
    </citation>
    <scope>NUCLEOTIDE SEQUENCE [GENOMIC DNA]</scope>
    <scope>VARIANTS GLN-39 AND GLY-281</scope>
</reference>
<reference key="12">
    <citation type="submission" date="2005-07" db="EMBL/GenBank/DDBJ databases">
        <authorList>
            <person name="Mural R.J."/>
            <person name="Istrail S."/>
            <person name="Sutton G.G."/>
            <person name="Florea L."/>
            <person name="Halpern A.L."/>
            <person name="Mobarry C.M."/>
            <person name="Lippert R."/>
            <person name="Walenz B."/>
            <person name="Shatkay H."/>
            <person name="Dew I."/>
            <person name="Miller J.R."/>
            <person name="Flanigan M.J."/>
            <person name="Edwards N.J."/>
            <person name="Bolanos R."/>
            <person name="Fasulo D."/>
            <person name="Halldorsson B.V."/>
            <person name="Hannenhalli S."/>
            <person name="Turner R."/>
            <person name="Yooseph S."/>
            <person name="Lu F."/>
            <person name="Nusskern D.R."/>
            <person name="Shue B.C."/>
            <person name="Zheng X.H."/>
            <person name="Zhong F."/>
            <person name="Delcher A.L."/>
            <person name="Huson D.H."/>
            <person name="Kravitz S.A."/>
            <person name="Mouchard L."/>
            <person name="Reinert K."/>
            <person name="Remington K.A."/>
            <person name="Clark A.G."/>
            <person name="Waterman M.S."/>
            <person name="Eichler E.E."/>
            <person name="Adams M.D."/>
            <person name="Hunkapiller M.W."/>
            <person name="Myers E.W."/>
            <person name="Venter J.C."/>
        </authorList>
    </citation>
    <scope>NUCLEOTIDE SEQUENCE [LARGE SCALE GENOMIC DNA]</scope>
</reference>
<reference key="13">
    <citation type="journal article" date="2004" name="Genome Res.">
        <title>The status, quality, and expansion of the NIH full-length cDNA project: the Mammalian Gene Collection (MGC).</title>
        <authorList>
            <consortium name="The MGC Project Team"/>
        </authorList>
    </citation>
    <scope>NUCLEOTIDE SEQUENCE [LARGE SCALE MRNA] (ISOFORM 1)</scope>
    <source>
        <tissue>Bone marrow</tissue>
        <tissue>Placenta</tissue>
        <tissue>Testis</tissue>
    </source>
</reference>
<reference key="14">
    <citation type="submission" date="2004-07" db="EMBL/GenBank/DDBJ databases">
        <title>Identification of novel polymorphisms in the RAD1 gene.</title>
        <authorList>
            <person name="Saegusa K.K."/>
            <person name="Suga T.K."/>
            <person name="Imai T."/>
        </authorList>
    </citation>
    <scope>NUCLEOTIDE SEQUENCE [GENOMIC DNA] OF 104-188 AND 223-282</scope>
</reference>
<reference key="15">
    <citation type="journal article" date="1999" name="Mol. Biol. Cell">
        <title>The human G2 checkpoint control protein hRAD9 is a nuclear phosphoprotein that forms complexes with hRAD1 and hHUS1.</title>
        <authorList>
            <person name="St Onge R.P."/>
            <person name="Udell C.M."/>
            <person name="Casselman R."/>
            <person name="Davey S."/>
        </authorList>
    </citation>
    <scope>INTERACTION WITH HUS1 AND RAD9A</scope>
</reference>
<reference key="16">
    <citation type="journal article" date="2000" name="Genomics">
        <title>Physical interaction among human checkpoint control proteins HUS1p, RAD1p, and RAD9p, and implications for the regulation of cell cycle progression.</title>
        <authorList>
            <person name="Hang H."/>
            <person name="Lieberman H.B."/>
        </authorList>
    </citation>
    <scope>INTERACTION WITH HUS1 AND RAD9A</scope>
</reference>
<reference key="17">
    <citation type="journal article" date="2000" name="J. Biol. Chem.">
        <title>HDAC1, a histone deacetylase, forms a complex with Hus1 and Rad9, two G2/M checkpoint Rad proteins.</title>
        <authorList>
            <person name="Cai R.L."/>
            <person name="Yan-Neale Y."/>
            <person name="Cueto M.A."/>
            <person name="Xu H."/>
            <person name="Cohen D."/>
        </authorList>
    </citation>
    <scope>FUNCTION</scope>
    <scope>IDENTIFICATION IN THE 9-1-1 COMPLEX ASSOCIATED WITH HDAC1</scope>
</reference>
<reference key="18">
    <citation type="journal article" date="2000" name="J. Biol. Chem.">
        <title>The human checkpoint protein hRad17 interacts with the PCNA-like proteins hRad1, hHus1, and hRad9.</title>
        <authorList>
            <person name="Rauen M."/>
            <person name="Burtelow M.A."/>
            <person name="Dufault V.M."/>
            <person name="Karnitz L.M."/>
        </authorList>
    </citation>
    <scope>FUNCTION</scope>
    <scope>IDENTIFICATION IN THE 9-1-1 COMPLEX ASSOCIATED WITH RAD17</scope>
    <scope>MUTAGENESIS OF 226-SER--LYS-233</scope>
</reference>
<reference key="19">
    <citation type="journal article" date="2001" name="Biochem. Biophys. Res. Commun.">
        <title>The J domain of Tpr2 regulates its interaction with the proapoptotic and cell-cycle checkpoint protein, Rad9.</title>
        <authorList>
            <person name="Xiang S.L."/>
            <person name="Kumano T."/>
            <person name="Iwasaki S.I."/>
            <person name="Sun X."/>
            <person name="Yoshioka K."/>
            <person name="Yamamoto K.C."/>
        </authorList>
    </citation>
    <scope>INTERACTION WITH DNAJC7</scope>
</reference>
<reference key="20">
    <citation type="journal article" date="2002" name="Genomics">
        <title>Identification and characterization of a paralog of human cell cycle checkpoint gene HUS1.</title>
        <authorList>
            <person name="Hang H."/>
            <person name="Zhang Y."/>
            <person name="Dunbrack R.L. Jr."/>
            <person name="Wang C."/>
            <person name="Lieberman H.B."/>
        </authorList>
    </citation>
    <scope>INTERACTION WITH HUS1B</scope>
</reference>
<reference key="21">
    <citation type="journal article" date="2003" name="Cancer Res.">
        <title>Expression of mammalian paralogues of HRAD9 and Mrad9 checkpoint control genes in normal and cancerous testicular tissue.</title>
        <authorList>
            <person name="Hopkins K.M."/>
            <person name="Wang X."/>
            <person name="Berlin A."/>
            <person name="Hang H."/>
            <person name="Thaker H.M."/>
            <person name="Lieberman H.B."/>
        </authorList>
    </citation>
    <scope>INTERACTION WITH RAD9B</scope>
</reference>
<reference key="22">
    <citation type="journal article" date="2003" name="Genomics">
        <title>Identification and characterization of RAD9B, a paralog of the RAD9 checkpoint gene.</title>
        <authorList>
            <person name="Dufault V.M."/>
            <person name="Oestreich A.J."/>
            <person name="Vroman B.T."/>
            <person name="Karnitz L.M."/>
        </authorList>
    </citation>
    <scope>INTERACTION WITH RAD9B</scope>
</reference>
<reference key="23">
    <citation type="journal article" date="2003" name="Proc. Natl. Acad. Sci. U.S.A.">
        <title>Loading of the human 9-1-1 checkpoint complex onto DNA by the checkpoint clamp loader hRad17-replication factor C complex in vitro.</title>
        <authorList>
            <person name="Bermudez V.P."/>
            <person name="Lindsey-Boltz L.A."/>
            <person name="Cesare A.J."/>
            <person name="Maniwa Y."/>
            <person name="Griffith J.D."/>
            <person name="Hurwitz J."/>
            <person name="Sancar A."/>
        </authorList>
    </citation>
    <scope>FUNCTION</scope>
    <scope>ASSOCIATION OF THE 9-1-1 COMPLEX WITH THE RAD17-RFC COMPLEX</scope>
    <scope>ELECTRON MICROSCOPY OF THE 9-1-1 AND RAD17-RFC COMPLEXES BOUND TO DNA</scope>
</reference>
<reference key="24">
    <citation type="journal article" date="2004" name="Nucleic Acids Res.">
        <title>The human Rad9/Rad1/Hus1 damage sensor clamp interacts with DNA polymerase beta and increases its DNA substrate utilisation efficiency: implications for DNA repair.</title>
        <authorList>
            <person name="Toueille M."/>
            <person name="El-Andaloussi N."/>
            <person name="Frouin I."/>
            <person name="Freire R."/>
            <person name="Funk D."/>
            <person name="Shevelev I."/>
            <person name="Friedrich-Heineken E."/>
            <person name="Villani G."/>
            <person name="Hottiger M.O."/>
            <person name="Huebscher U."/>
        </authorList>
    </citation>
    <scope>FUNCTION</scope>
    <scope>IDENTIFICATION IN THE 9-1-1 COMPLEX ASSOCIATED WITH POLB</scope>
    <scope>INTERACTION WITH POLB</scope>
</reference>
<reference key="25">
    <citation type="journal article" date="2004" name="Proc. Natl. Acad. Sci. U.S.A.">
        <title>The human Rad9-Rad1-Hus1 checkpoint complex stimulates flap endonuclease 1.</title>
        <authorList>
            <person name="Wang W."/>
            <person name="Brandt P."/>
            <person name="Rossi M.L."/>
            <person name="Lindsey-Boltz L."/>
            <person name="Podust V."/>
            <person name="Fanning E."/>
            <person name="Sancar A."/>
            <person name="Bambara R.A."/>
        </authorList>
    </citation>
    <scope>FUNCTION</scope>
    <scope>IDENTIFICATION IN THE 9-1-1 COMPLEX ASSOCIATED WITH FEN1</scope>
</reference>
<reference key="26">
    <citation type="journal article" date="2005" name="Biochem. J.">
        <title>The human checkpoint sensor and alternative DNA clamp Rad9-Rad1-Hus1 modulates the activity of DNA ligase I, a component of the long-patch base excision repair machinery.</title>
        <authorList>
            <person name="Smirnova E."/>
            <person name="Toueille M."/>
            <person name="Markkanen E."/>
            <person name="Huebscher U."/>
        </authorList>
    </citation>
    <scope>FUNCTION</scope>
    <scope>IDENTIFICATION IN THE 9-1-1 COMPLEX ASSOCIATED WITH LIG1</scope>
</reference>
<reference key="27">
    <citation type="journal article" date="2005" name="J. Mol. Biol.">
        <title>The two DNA clamps Rad9/Rad1/Hus1 complex and proliferating cell nuclear antigen differentially regulate flap endonuclease 1 activity.</title>
        <authorList>
            <person name="Friedrich-Heineken E."/>
            <person name="Toueille M."/>
            <person name="Taennler B."/>
            <person name="Buerki C."/>
            <person name="Ferrari E."/>
            <person name="Hottiger M.O."/>
            <person name="Huebscher U."/>
        </authorList>
    </citation>
    <scope>IDENTIFICATION IN THE 9-1-1 COMPLEX ASSOCIATED WITH FEN1</scope>
    <scope>INTERACTION WITH FEN1</scope>
</reference>
<reference key="28">
    <citation type="journal article" date="2005" name="Oncogene">
        <title>Interaction and colocalization of Rad9/Rad1/Hus1 checkpoint complex with replication protein A in human cells.</title>
        <authorList>
            <person name="Wu X."/>
            <person name="Shell S.M."/>
            <person name="Zou Y."/>
        </authorList>
    </citation>
    <scope>IDENTIFICATION IN THE 9-1-1 COMPLEX ASSOCIATED WITH RPA1 AND RPA2</scope>
</reference>
<reference key="29">
    <citation type="journal article" date="2011" name="BMC Syst. Biol.">
        <title>Initial characterization of the human central proteome.</title>
        <authorList>
            <person name="Burkard T.R."/>
            <person name="Planyavsky M."/>
            <person name="Kaupe I."/>
            <person name="Breitwieser F.P."/>
            <person name="Buerckstuemmer T."/>
            <person name="Bennett K.L."/>
            <person name="Superti-Furga G."/>
            <person name="Colinge J."/>
        </authorList>
    </citation>
    <scope>IDENTIFICATION BY MASS SPECTROMETRY [LARGE SCALE ANALYSIS]</scope>
</reference>
<reference key="30">
    <citation type="journal article" date="2011" name="Science">
        <title>A DNA damage response screen identifies RHINO, a 9-1-1 and TopBP1 interacting protein required for ATR signaling.</title>
        <authorList>
            <person name="Cotta-Ramusino C."/>
            <person name="McDonald E.R. III"/>
            <person name="Hurov K."/>
            <person name="Sowa M.E."/>
            <person name="Harper J.W."/>
            <person name="Elledge S.J."/>
        </authorList>
    </citation>
    <scope>FUNCTION</scope>
    <scope>IDENTIFICATION BY MASS SPECTROMETRY</scope>
</reference>
<reference key="31">
    <citation type="journal article" date="2012" name="Proc. Natl. Acad. Sci. U.S.A.">
        <title>N-terminal acetylome analyses and functional insights of the N-terminal acetyltransferase NatB.</title>
        <authorList>
            <person name="Van Damme P."/>
            <person name="Lasa M."/>
            <person name="Polevoda B."/>
            <person name="Gazquez C."/>
            <person name="Elosegui-Artola A."/>
            <person name="Kim D.S."/>
            <person name="De Juan-Pardo E."/>
            <person name="Demeyer K."/>
            <person name="Hole K."/>
            <person name="Larrea E."/>
            <person name="Timmerman E."/>
            <person name="Prieto J."/>
            <person name="Arnesen T."/>
            <person name="Sherman F."/>
            <person name="Gevaert K."/>
            <person name="Aldabe R."/>
        </authorList>
    </citation>
    <scope>IDENTIFICATION BY MASS SPECTROMETRY [LARGE SCALE ANALYSIS]</scope>
</reference>
<reference evidence="24" key="32">
    <citation type="journal article" date="2020" name="J. Biol. Chem.">
        <title>Structure of the RAD9-RAD1-HUS1 checkpoint clamp bound to RHINO sheds light on the other side of the DNA clamp.</title>
        <authorList>
            <person name="Hara K."/>
            <person name="Iida N."/>
            <person name="Tamafune R."/>
            <person name="Ohashi E."/>
            <person name="Sakurai H."/>
            <person name="Ishikawa Y."/>
            <person name="Hishiki A."/>
            <person name="Hashimoto H."/>
        </authorList>
    </citation>
    <scope>X-RAY CRYSTALLOGRAPHY (2.40 ANGSTROMS) IN COMPLEX WITH RHNO1; HUS1 AND RAD9A</scope>
    <scope>IDENTIFICATION IN THE 9-1-1 COMPLEX</scope>
    <scope>INTERACTION WITH RHNO1</scope>
    <scope>MUTAGENESIS OF PHE-64; LYS-155; ARG-244; GLN-254; MET-256 AND PHE-266</scope>
</reference>
<reference evidence="25" key="33">
    <citation type="journal article" date="2023" name="J. Biol. Chem.">
        <title>The 9-1-1 DNA clamp subunit RAD1 forms specific interactions with clamp loader RAD17, revealing functional implications for binding-protein RHINO.</title>
        <authorList>
            <person name="Hara K."/>
            <person name="Hishiki A."/>
            <person name="Hoshino T."/>
            <person name="Nagata K."/>
            <person name="Iida N."/>
            <person name="Sawada Y."/>
            <person name="Ohashi E."/>
            <person name="Hashimoto H."/>
        </authorList>
    </citation>
    <scope>X-RAY CRYSTALLOGRAPHY (2.12 ANGSTROMS) IN COMPLEX WITH RAD17; HUS1 AND RAD9A</scope>
</reference>
<keyword id="KW-0002">3D-structure</keyword>
<keyword id="KW-0025">Alternative splicing</keyword>
<keyword id="KW-0227">DNA damage</keyword>
<keyword id="KW-0234">DNA repair</keyword>
<keyword id="KW-0539">Nucleus</keyword>
<keyword id="KW-1267">Proteomics identification</keyword>
<keyword id="KW-1185">Reference proteome</keyword>
<accession>O60671</accession>
<accession>O75572</accession>
<accession>O95304</accession>
<accession>Q1W161</accession>
<accession>Q5KSM0</accession>
<accession>Q5KSM1</accession>
<accession>Q9UEP1</accession>
<proteinExistence type="evidence at protein level"/>
<comment type="function">
    <text evidence="3 4 7 10 11 12 15">Component of the 9-1-1 cell-cycle checkpoint response complex that plays a major role in DNA repair (PubMed:10846170, PubMed:10884395). The 9-1-1 complex is recruited to DNA lesion upon damage by the RAD17-replication factor C (RFC) clamp loader complex (PubMed:12578958). Acts then as a sliding clamp platform on DNA for several proteins involved in long-patch base excision repair (LP-BER) (PubMed:15871698). The 9-1-1 complex stimulates DNA polymerase beta (POLB) activity by increasing its affinity for the 3'-OH end of the primer-template and stabilizes POLB to those sites where LP-BER proceeds; endonuclease FEN1 cleavage activity on substrates with double, nick, or gap flaps of distinct sequences and lengths; and DNA ligase I (LIG1) on long-patch base excision repair substrates (PubMed:15314187, PubMed:15556996, PubMed:15871698). The 9-1-1 complex is necessary for the recruitment of RHNO1 to sites of double-stranded breaks (DSB) occurring during the S phase (PubMed:21659603).</text>
</comment>
<comment type="subunit">
    <text evidence="1 2 3 4 5 6 7 8 9 10 11 12 13 14 16">Component of the toroidal 9-1-1 (RAD9-RAD1-HUS1) complex, composed of RAD9A, RAD1 and HUS1 (PubMed:10846170, PubMed:10884395, PubMed:31776186). The 9-1-1 complex associates with LIG1, POLB, FEN1, RAD17, HDAC1, RPA1 and RPA2 (PubMed:10846170, PubMed:10884395, PubMed:15314187, PubMed:15556996, PubMed:15871698, PubMed:15897895, PubMed:16216273). The 9-1-1 complex associates with the RAD17-RFC complex (PubMed:12578958). RAD1 interacts with POLB, FEN1, HUS1, HUS1B, RAD9A and RAD9B (PubMed:10359610, PubMed:10777662, PubMed:11944979, PubMed:14500360, PubMed:14611806, PubMed:15314187, PubMed:15556996, PubMed:16216273). Interacts with DNAJC7 (PubMed:11573955). Interacts with RHNO1; interaction is direct (PubMed:31776186).</text>
</comment>
<comment type="interaction">
    <interactant intactId="EBI-721835">
        <id>O60671</id>
    </interactant>
    <interactant intactId="EBI-1056174">
        <id>O60921</id>
        <label>HUS1</label>
    </interactant>
    <organismsDiffer>false</organismsDiffer>
    <experiments>9</experiments>
</comment>
<comment type="interaction">
    <interactant intactId="EBI-721835">
        <id>O60671</id>
    </interactant>
    <interactant intactId="EBI-21251460">
        <id>O60260-5</id>
        <label>PRKN</label>
    </interactant>
    <organismsDiffer>false</organismsDiffer>
    <experiments>6</experiments>
</comment>
<comment type="interaction">
    <interactant intactId="EBI-721835">
        <id>O60671</id>
    </interactant>
    <interactant intactId="EBI-2606224">
        <id>Q99638</id>
        <label>RAD9A</label>
    </interactant>
    <organismsDiffer>false</organismsDiffer>
    <experiments>5</experiments>
</comment>
<comment type="subcellular location">
    <subcellularLocation>
        <location evidence="18">Nucleus</location>
    </subcellularLocation>
</comment>
<comment type="alternative products">
    <event type="alternative splicing"/>
    <isoform>
        <id>O60671-1</id>
        <name>1</name>
        <name>Hrad1A</name>
        <sequence type="displayed"/>
    </isoform>
    <isoform>
        <id>O60671-2</id>
        <name>2</name>
        <name>Hrad1B</name>
        <sequence type="described" ref="VSP_017334"/>
    </isoform>
    <isoform>
        <id>O60671-3</id>
        <name>3</name>
        <sequence type="described" ref="VSP_017335 VSP_017336"/>
    </isoform>
</comment>
<comment type="tissue specificity">
    <text evidence="18">Expressed in testis, uterus, bladder, spleen, ovaries, lung, brain and muscle (at protein level).</text>
</comment>
<comment type="miscellaneous">
    <molecule>Isoform 3</molecule>
    <text evidence="23">May be produced at very low levels due to a premature stop codon in the mRNA, leading to nonsense-mediated mRNA decay.</text>
</comment>
<comment type="similarity">
    <text evidence="23">Belongs to the rad1 family.</text>
</comment>
<comment type="caution">
    <molecule>Isoform 1</molecule>
    <text evidence="17 18">Was reported to possess 3'-&gt;5' double stranded DNA exonuclease activity (PubMed:9660799). However, this activity was not confirmed by other publications (PubMed:9716408).</text>
</comment>
<comment type="sequence caution" evidence="23">
    <conflict type="erroneous initiation">
        <sequence resource="EMBL-CDS" id="AAC35550"/>
    </conflict>
    <text>Truncated N-terminus.</text>
</comment>
<comment type="sequence caution" evidence="23">
    <conflict type="frameshift">
        <sequence resource="EMBL-CDS" id="AAC35550"/>
    </conflict>
</comment>
<comment type="sequence caution" evidence="23">
    <conflict type="erroneous initiation">
        <sequence resource="EMBL-CDS" id="CAA06249"/>
    </conflict>
    <text>Truncated N-terminus.</text>
</comment>
<comment type="sequence caution" evidence="23">
    <conflict type="frameshift">
        <sequence resource="EMBL-CDS" id="CAA06249"/>
    </conflict>
</comment>
<sequence>MPLLTQQIQDEDDQYSLVASLDNVRNLSTILKAIHFREHATCFATKNGIKVTVENAKCVQANAFIQAGIFQEFKVQEESVTFRINLTVLLDCLSIFGSSPMPGTLTALRMCYQGYGYPLMLFLEEGGVVTVCKINTQEPEETLDFDFCSTNVINKIILQSEGLREAFSELDMTSEVLQITMSPDKPYFRLSTFGNAGSSHLDYPKDSDLMEAFHCNQTQVNRYKISLLKPSTKALVLSCKVSIRTDNRGFLSLQYMIRNEDGQICFVEYYCCPDEEVPESES</sequence>
<gene>
    <name type="primary">RAD1</name>
    <name type="synonym">REC1</name>
</gene>
<protein>
    <recommendedName>
        <fullName>Cell cycle checkpoint protein RAD1</fullName>
        <shortName>hRAD1</shortName>
    </recommendedName>
    <alternativeName>
        <fullName>Rad1-like DNA damage checkpoint protein</fullName>
    </alternativeName>
</protein>